<feature type="initiator methionine" description="Removed" evidence="1">
    <location>
        <position position="1"/>
    </location>
</feature>
<feature type="chain" id="PRO_0000275768" description="Photosystem II reaction center protein H">
    <location>
        <begin position="2"/>
        <end position="73"/>
    </location>
</feature>
<feature type="transmembrane region" description="Helical" evidence="2">
    <location>
        <begin position="41"/>
        <end position="61"/>
    </location>
</feature>
<feature type="modified residue" description="Phosphothreonine" evidence="2">
    <location>
        <position position="3"/>
    </location>
</feature>
<feature type="modified residue" description="Phosphothreonine" evidence="2">
    <location>
        <position position="5"/>
    </location>
</feature>
<accession>Q06GN1</accession>
<geneLocation type="chloroplast"/>
<protein>
    <recommendedName>
        <fullName evidence="2">Photosystem II reaction center protein H</fullName>
        <shortName evidence="2">PSII-H</shortName>
    </recommendedName>
    <alternativeName>
        <fullName evidence="2">Photosystem II 10 kDa phosphoprotein</fullName>
    </alternativeName>
</protein>
<sequence length="73" mass="7755">MATQTVEDSSKSGPRRTVIGDLLKPLNSEYGKVAPGWGTTPLMGVAMALFAIFLSIILEIYNSSVLLDGILVS</sequence>
<gene>
    <name evidence="2" type="primary">psbH</name>
</gene>
<comment type="function">
    <text evidence="2">One of the components of the core complex of photosystem II (PSII), required for its stability and/or assembly. PSII is a light-driven water:plastoquinone oxidoreductase that uses light energy to abstract electrons from H(2)O, generating O(2) and a proton gradient subsequently used for ATP formation. It consists of a core antenna complex that captures photons, and an electron transfer chain that converts photonic excitation into a charge separation.</text>
</comment>
<comment type="subunit">
    <text evidence="2">PSII is composed of 1 copy each of membrane proteins PsbA, PsbB, PsbC, PsbD, PsbE, PsbF, PsbH, PsbI, PsbJ, PsbK, PsbL, PsbM, PsbT, PsbX, PsbY, PsbZ, Psb30/Ycf12, at least 3 peripheral proteins of the oxygen-evolving complex and a large number of cofactors. It forms dimeric complexes.</text>
</comment>
<comment type="subcellular location">
    <subcellularLocation>
        <location evidence="2">Plastid</location>
        <location evidence="2">Chloroplast thylakoid membrane</location>
        <topology evidence="2">Single-pass membrane protein</topology>
    </subcellularLocation>
</comment>
<comment type="PTM">
    <text evidence="2">Phosphorylation is a light-dependent reaction catalyzed by a membrane-bound kinase; phosphorylation occurs on Thr residue(s) in the N-terminus of the protein.</text>
</comment>
<comment type="similarity">
    <text evidence="2">Belongs to the PsbH family.</text>
</comment>
<proteinExistence type="inferred from homology"/>
<reference key="1">
    <citation type="journal article" date="2006" name="BMC Evol. Biol.">
        <title>Complete plastid genome sequences of Drimys, Liriodendron, and Piper: implications for the phylogenetic relationships of magnoliids.</title>
        <authorList>
            <person name="Cai Z."/>
            <person name="Penaflor C."/>
            <person name="Kuehl J.V."/>
            <person name="Leebens-Mack J."/>
            <person name="Carlson J.E."/>
            <person name="dePamphilis C.W."/>
            <person name="Boore J.L."/>
            <person name="Jansen R.K."/>
        </authorList>
    </citation>
    <scope>NUCLEOTIDE SEQUENCE [LARGE SCALE GENOMIC DNA]</scope>
</reference>
<dbReference type="EMBL" id="DQ887677">
    <property type="protein sequence ID" value="ABI14500.1"/>
    <property type="molecule type" value="Genomic_DNA"/>
</dbReference>
<dbReference type="RefSeq" id="YP_784502.1">
    <property type="nucleotide sequence ID" value="NC_008457.1"/>
</dbReference>
<dbReference type="SMR" id="Q06GN1"/>
<dbReference type="GeneID" id="4363647"/>
<dbReference type="GO" id="GO:0009535">
    <property type="term" value="C:chloroplast thylakoid membrane"/>
    <property type="evidence" value="ECO:0007669"/>
    <property type="project" value="UniProtKB-SubCell"/>
</dbReference>
<dbReference type="GO" id="GO:0009523">
    <property type="term" value="C:photosystem II"/>
    <property type="evidence" value="ECO:0007669"/>
    <property type="project" value="UniProtKB-KW"/>
</dbReference>
<dbReference type="GO" id="GO:0042301">
    <property type="term" value="F:phosphate ion binding"/>
    <property type="evidence" value="ECO:0007669"/>
    <property type="project" value="InterPro"/>
</dbReference>
<dbReference type="GO" id="GO:0015979">
    <property type="term" value="P:photosynthesis"/>
    <property type="evidence" value="ECO:0007669"/>
    <property type="project" value="UniProtKB-UniRule"/>
</dbReference>
<dbReference type="GO" id="GO:0050821">
    <property type="term" value="P:protein stabilization"/>
    <property type="evidence" value="ECO:0007669"/>
    <property type="project" value="InterPro"/>
</dbReference>
<dbReference type="FunFam" id="1.20.5.880:FF:000001">
    <property type="entry name" value="Photosystem II reaction center protein H"/>
    <property type="match status" value="1"/>
</dbReference>
<dbReference type="Gene3D" id="1.20.5.880">
    <property type="entry name" value="Photosystem II reaction center protein H"/>
    <property type="match status" value="1"/>
</dbReference>
<dbReference type="HAMAP" id="MF_00752">
    <property type="entry name" value="PSII_PsbH"/>
    <property type="match status" value="1"/>
</dbReference>
<dbReference type="InterPro" id="IPR001056">
    <property type="entry name" value="PSII_PsbH"/>
</dbReference>
<dbReference type="InterPro" id="IPR036863">
    <property type="entry name" value="PSII_PsbH_sf"/>
</dbReference>
<dbReference type="NCBIfam" id="NF002728">
    <property type="entry name" value="PRK02624.1"/>
    <property type="match status" value="1"/>
</dbReference>
<dbReference type="PANTHER" id="PTHR34469">
    <property type="entry name" value="PHOTOSYSTEM II REACTION CENTER PROTEIN H"/>
    <property type="match status" value="1"/>
</dbReference>
<dbReference type="PANTHER" id="PTHR34469:SF4">
    <property type="entry name" value="PHOTOSYSTEM II REACTION CENTER PROTEIN H"/>
    <property type="match status" value="1"/>
</dbReference>
<dbReference type="Pfam" id="PF00737">
    <property type="entry name" value="PsbH"/>
    <property type="match status" value="1"/>
</dbReference>
<dbReference type="SUPFAM" id="SSF161025">
    <property type="entry name" value="Photosystem II 10 kDa phosphoprotein PsbH"/>
    <property type="match status" value="1"/>
</dbReference>
<keyword id="KW-0150">Chloroplast</keyword>
<keyword id="KW-0472">Membrane</keyword>
<keyword id="KW-0597">Phosphoprotein</keyword>
<keyword id="KW-0602">Photosynthesis</keyword>
<keyword id="KW-0604">Photosystem II</keyword>
<keyword id="KW-0934">Plastid</keyword>
<keyword id="KW-0793">Thylakoid</keyword>
<keyword id="KW-0812">Transmembrane</keyword>
<keyword id="KW-1133">Transmembrane helix</keyword>
<name>PSBH_PIPCE</name>
<organism>
    <name type="scientific">Piper cenocladum</name>
    <name type="common">Ant piper</name>
    <dbReference type="NCBI Taxonomy" id="398741"/>
    <lineage>
        <taxon>Eukaryota</taxon>
        <taxon>Viridiplantae</taxon>
        <taxon>Streptophyta</taxon>
        <taxon>Embryophyta</taxon>
        <taxon>Tracheophyta</taxon>
        <taxon>Spermatophyta</taxon>
        <taxon>Magnoliopsida</taxon>
        <taxon>Magnoliidae</taxon>
        <taxon>Piperales</taxon>
        <taxon>Piperaceae</taxon>
        <taxon>Piper</taxon>
    </lineage>
</organism>
<evidence type="ECO:0000250" key="1">
    <source>
        <dbReference type="UniProtKB" id="P56780"/>
    </source>
</evidence>
<evidence type="ECO:0000255" key="2">
    <source>
        <dbReference type="HAMAP-Rule" id="MF_00752"/>
    </source>
</evidence>